<sequence length="122" mass="13780">MSNIKKYIIDYDWKASIEIEIDHDVMTEEKLHQINNFWSDSEYRLNKHGSVLNAVLIMLAQHALLIAISSDLNAYGVVCEFDWNDGNGQEGWPPMDGSEGIRITDIDTSGIFDSDDMTIKAA</sequence>
<accession>P68658</accession>
<accession>P03757</accession>
<gene>
    <name type="primary">ea10</name>
    <name type="synonym">ssb</name>
</gene>
<protein>
    <recommendedName>
        <fullName>Protein ea10</fullName>
    </recommendedName>
</protein>
<feature type="chain" id="PRO_0000077601" description="Protein ea10">
    <location>
        <begin position="1"/>
        <end position="122"/>
    </location>
</feature>
<organismHost>
    <name type="scientific">Escherichia coli</name>
    <dbReference type="NCBI Taxonomy" id="562"/>
</organismHost>
<comment type="function">
    <text>The ea10 gene protein is believed to be involved in the production of the Tro phenotype. This phenotype is expressed when phages that possess a mutant cro gene and a thermolabile cI repressor gene are unable to propagate at restrictive temperatures. This inability is correlated with the shutoff of host macromolecular synthesis.</text>
</comment>
<organism>
    <name type="scientific">Escherichia phage lambda</name>
    <name type="common">Bacteriophage lambda</name>
    <dbReference type="NCBI Taxonomy" id="2681611"/>
    <lineage>
        <taxon>Viruses</taxon>
        <taxon>Duplodnaviria</taxon>
        <taxon>Heunggongvirae</taxon>
        <taxon>Uroviricota</taxon>
        <taxon>Caudoviricetes</taxon>
        <taxon>Lambdavirus</taxon>
        <taxon>Lambdavirus lambda</taxon>
    </lineage>
</organism>
<proteinExistence type="predicted"/>
<dbReference type="EMBL" id="V00638">
    <property type="protein sequence ID" value="CAA23980.1"/>
    <property type="molecule type" value="Genomic_DNA"/>
</dbReference>
<dbReference type="EMBL" id="J02459">
    <property type="protein sequence ID" value="AAA96574.1"/>
    <property type="molecule type" value="Genomic_DNA"/>
</dbReference>
<dbReference type="PIR" id="B43010">
    <property type="entry name" value="QEBPL"/>
</dbReference>
<dbReference type="RefSeq" id="NP_040621.1">
    <property type="nucleotide sequence ID" value="NC_001416.1"/>
</dbReference>
<dbReference type="GeneID" id="2703541"/>
<dbReference type="KEGG" id="vg:2703541"/>
<dbReference type="Proteomes" id="UP000001711">
    <property type="component" value="Genome"/>
</dbReference>
<dbReference type="InterPro" id="IPR024252">
    <property type="entry name" value="DUF2528"/>
</dbReference>
<dbReference type="Pfam" id="PF10800">
    <property type="entry name" value="DUF2528"/>
    <property type="match status" value="1"/>
</dbReference>
<name>EA10_LAMBD</name>
<reference key="1">
    <citation type="journal article" date="1982" name="J. Mol. Biol.">
        <title>Nucleotide sequence of bacteriophage lambda DNA.</title>
        <authorList>
            <person name="Sanger F."/>
            <person name="Coulson A.R."/>
            <person name="Hong G.F."/>
            <person name="Hill D.F."/>
            <person name="Petersen G.B."/>
        </authorList>
    </citation>
    <scope>NUCLEOTIDE SEQUENCE [LARGE SCALE GENOMIC DNA]</scope>
</reference>
<reference key="2">
    <citation type="journal article" date="1981" name="Nucleic Acids Res.">
        <title>The DNA sequence of the phage lambda genome between PL and the gene bet.</title>
        <authorList>
            <person name="Ineichen K."/>
            <person name="Shepherd J.C.W."/>
            <person name="Bickle T.A."/>
        </authorList>
    </citation>
    <scope>NUCLEOTIDE SEQUENCE [GENOMIC DNA]</scope>
</reference>
<keyword id="KW-1185">Reference proteome</keyword>